<organism>
    <name type="scientific">Pseudomonas putida (strain ATCC 47054 / DSM 6125 / CFBP 8728 / NCIMB 11950 / KT2440)</name>
    <dbReference type="NCBI Taxonomy" id="160488"/>
    <lineage>
        <taxon>Bacteria</taxon>
        <taxon>Pseudomonadati</taxon>
        <taxon>Pseudomonadota</taxon>
        <taxon>Gammaproteobacteria</taxon>
        <taxon>Pseudomonadales</taxon>
        <taxon>Pseudomonadaceae</taxon>
        <taxon>Pseudomonas</taxon>
    </lineage>
</organism>
<comment type="function">
    <text evidence="1">Essential cell division protein that coordinates cell division and chromosome segregation. The N-terminus is involved in assembly of the cell-division machinery. The C-terminus functions as a DNA motor that moves dsDNA in an ATP-dependent manner towards the dif recombination site, which is located within the replication terminus region. Translocation stops specifically at Xer-dif sites, where FtsK interacts with the Xer recombinase, allowing activation of chromosome unlinking by recombination. FtsK orienting polar sequences (KOPS) guide the direction of DNA translocation. FtsK can remove proteins from DNA as it translocates, but translocation stops specifically at XerCD-dif site, thereby preventing removal of XerC and XerD from dif (By similarity).</text>
</comment>
<comment type="subunit">
    <text evidence="1">Homohexamer. Forms a ring that surrounds DNA (By similarity).</text>
</comment>
<comment type="subcellular location">
    <subcellularLocation>
        <location evidence="1">Cell inner membrane</location>
        <topology evidence="1">Multi-pass membrane protein</topology>
    </subcellularLocation>
    <text evidence="1">Located at the septum.</text>
</comment>
<comment type="domain">
    <text evidence="1">Consists of an N-terminal domain, which is sufficient for the localization to the septal ring and is required for cell division, followed by a linker domain, and a C-terminal domain, which forms the translocation motor involved in chromosome segregation. The C-terminal domain can be further subdivided into alpha, beta and gamma subdomains. The alpha and beta subdomains multimerise to produce a hexameric ring, contain the nucleotide binding motif and form the DNA pump. The gamma subdomain is a regulatory subdomain that controls translocation of DNA by recognition of KOPS motifs and interacts with XerD recombinase (By similarity).</text>
</comment>
<comment type="similarity">
    <text evidence="5">Belongs to the FtsK/SpoIIIE/SftA family.</text>
</comment>
<keyword id="KW-0067">ATP-binding</keyword>
<keyword id="KW-0131">Cell cycle</keyword>
<keyword id="KW-0132">Cell division</keyword>
<keyword id="KW-0997">Cell inner membrane</keyword>
<keyword id="KW-1003">Cell membrane</keyword>
<keyword id="KW-0159">Chromosome partition</keyword>
<keyword id="KW-0238">DNA-binding</keyword>
<keyword id="KW-0472">Membrane</keyword>
<keyword id="KW-0547">Nucleotide-binding</keyword>
<keyword id="KW-1185">Reference proteome</keyword>
<keyword id="KW-0812">Transmembrane</keyword>
<keyword id="KW-1133">Transmembrane helix</keyword>
<protein>
    <recommendedName>
        <fullName>DNA translocase FtsK</fullName>
    </recommendedName>
</protein>
<reference key="1">
    <citation type="journal article" date="2002" name="Environ. Microbiol.">
        <title>Complete genome sequence and comparative analysis of the metabolically versatile Pseudomonas putida KT2440.</title>
        <authorList>
            <person name="Nelson K.E."/>
            <person name="Weinel C."/>
            <person name="Paulsen I.T."/>
            <person name="Dodson R.J."/>
            <person name="Hilbert H."/>
            <person name="Martins dos Santos V.A.P."/>
            <person name="Fouts D.E."/>
            <person name="Gill S.R."/>
            <person name="Pop M."/>
            <person name="Holmes M."/>
            <person name="Brinkac L.M."/>
            <person name="Beanan M.J."/>
            <person name="DeBoy R.T."/>
            <person name="Daugherty S.C."/>
            <person name="Kolonay J.F."/>
            <person name="Madupu R."/>
            <person name="Nelson W.C."/>
            <person name="White O."/>
            <person name="Peterson J.D."/>
            <person name="Khouri H.M."/>
            <person name="Hance I."/>
            <person name="Chris Lee P."/>
            <person name="Holtzapple E.K."/>
            <person name="Scanlan D."/>
            <person name="Tran K."/>
            <person name="Moazzez A."/>
            <person name="Utterback T.R."/>
            <person name="Rizzo M."/>
            <person name="Lee K."/>
            <person name="Kosack D."/>
            <person name="Moestl D."/>
            <person name="Wedler H."/>
            <person name="Lauber J."/>
            <person name="Stjepandic D."/>
            <person name="Hoheisel J."/>
            <person name="Straetz M."/>
            <person name="Heim S."/>
            <person name="Kiewitz C."/>
            <person name="Eisen J.A."/>
            <person name="Timmis K.N."/>
            <person name="Duesterhoeft A."/>
            <person name="Tuemmler B."/>
            <person name="Fraser C.M."/>
        </authorList>
    </citation>
    <scope>NUCLEOTIDE SEQUENCE [LARGE SCALE GENOMIC DNA]</scope>
    <source>
        <strain>ATCC 47054 / DSM 6125 / CFBP 8728 / NCIMB 11950 / KT2440</strain>
    </source>
</reference>
<gene>
    <name type="primary">ftsK</name>
    <name type="ordered locus">PP_4004</name>
</gene>
<feature type="chain" id="PRO_0000098279" description="DNA translocase FtsK">
    <location>
        <begin position="1"/>
        <end position="834"/>
    </location>
</feature>
<feature type="transmembrane region" description="Helical" evidence="2">
    <location>
        <begin position="26"/>
        <end position="46"/>
    </location>
</feature>
<feature type="transmembrane region" description="Helical" evidence="2">
    <location>
        <begin position="73"/>
        <end position="93"/>
    </location>
</feature>
<feature type="transmembrane region" description="Helical" evidence="2">
    <location>
        <begin position="118"/>
        <end position="138"/>
    </location>
</feature>
<feature type="transmembrane region" description="Helical" evidence="2">
    <location>
        <begin position="168"/>
        <end position="188"/>
    </location>
</feature>
<feature type="topological domain" description="Cytoplasmic" evidence="2">
    <location>
        <begin position="189"/>
        <end position="834"/>
    </location>
</feature>
<feature type="domain" description="FtsK" evidence="3">
    <location>
        <begin position="473"/>
        <end position="685"/>
    </location>
</feature>
<feature type="region of interest" description="Disordered" evidence="4">
    <location>
        <begin position="238"/>
        <end position="318"/>
    </location>
</feature>
<feature type="compositionally biased region" description="Basic and acidic residues" evidence="4">
    <location>
        <begin position="240"/>
        <end position="272"/>
    </location>
</feature>
<feature type="binding site" evidence="3">
    <location>
        <begin position="493"/>
        <end position="498"/>
    </location>
    <ligand>
        <name>ATP</name>
        <dbReference type="ChEBI" id="CHEBI:30616"/>
    </ligand>
</feature>
<accession>Q88FS8</accession>
<dbReference type="EMBL" id="AE015451">
    <property type="protein sequence ID" value="AAN69598.1"/>
    <property type="molecule type" value="Genomic_DNA"/>
</dbReference>
<dbReference type="RefSeq" id="NP_746134.1">
    <property type="nucleotide sequence ID" value="NC_002947.4"/>
</dbReference>
<dbReference type="RefSeq" id="WP_010954811.1">
    <property type="nucleotide sequence ID" value="NZ_CP169744.1"/>
</dbReference>
<dbReference type="SMR" id="Q88FS8"/>
<dbReference type="STRING" id="160488.PP_4004"/>
<dbReference type="PaxDb" id="160488-PP_4004"/>
<dbReference type="KEGG" id="ppu:PP_4004"/>
<dbReference type="PATRIC" id="fig|160488.4.peg.4260"/>
<dbReference type="eggNOG" id="COG1674">
    <property type="taxonomic scope" value="Bacteria"/>
</dbReference>
<dbReference type="HOGENOM" id="CLU_001981_9_7_6"/>
<dbReference type="OrthoDB" id="9807790at2"/>
<dbReference type="PhylomeDB" id="Q88FS8"/>
<dbReference type="BioCyc" id="PPUT160488:G1G01-4271-MONOMER"/>
<dbReference type="Proteomes" id="UP000000556">
    <property type="component" value="Chromosome"/>
</dbReference>
<dbReference type="GO" id="GO:0005886">
    <property type="term" value="C:plasma membrane"/>
    <property type="evidence" value="ECO:0007669"/>
    <property type="project" value="UniProtKB-SubCell"/>
</dbReference>
<dbReference type="GO" id="GO:0005524">
    <property type="term" value="F:ATP binding"/>
    <property type="evidence" value="ECO:0007669"/>
    <property type="project" value="UniProtKB-KW"/>
</dbReference>
<dbReference type="GO" id="GO:0003677">
    <property type="term" value="F:DNA binding"/>
    <property type="evidence" value="ECO:0007669"/>
    <property type="project" value="UniProtKB-KW"/>
</dbReference>
<dbReference type="GO" id="GO:0051301">
    <property type="term" value="P:cell division"/>
    <property type="evidence" value="ECO:0007669"/>
    <property type="project" value="UniProtKB-KW"/>
</dbReference>
<dbReference type="GO" id="GO:0007059">
    <property type="term" value="P:chromosome segregation"/>
    <property type="evidence" value="ECO:0007669"/>
    <property type="project" value="UniProtKB-KW"/>
</dbReference>
<dbReference type="CDD" id="cd01127">
    <property type="entry name" value="TrwB_TraG_TraD_VirD4"/>
    <property type="match status" value="1"/>
</dbReference>
<dbReference type="FunFam" id="3.40.50.300:FF:000209">
    <property type="entry name" value="Cell division protein FtsK"/>
    <property type="match status" value="1"/>
</dbReference>
<dbReference type="FunFam" id="3.30.980.40:FF:000001">
    <property type="entry name" value="DNA translocase FtsK"/>
    <property type="match status" value="1"/>
</dbReference>
<dbReference type="Gene3D" id="3.30.980.40">
    <property type="match status" value="1"/>
</dbReference>
<dbReference type="Gene3D" id="3.40.50.300">
    <property type="entry name" value="P-loop containing nucleotide triphosphate hydrolases"/>
    <property type="match status" value="1"/>
</dbReference>
<dbReference type="Gene3D" id="1.10.10.10">
    <property type="entry name" value="Winged helix-like DNA-binding domain superfamily/Winged helix DNA-binding domain"/>
    <property type="match status" value="1"/>
</dbReference>
<dbReference type="InterPro" id="IPR050206">
    <property type="entry name" value="FtsK/SpoIIIE/SftA"/>
</dbReference>
<dbReference type="InterPro" id="IPR025199">
    <property type="entry name" value="FtsK_4TM"/>
</dbReference>
<dbReference type="InterPro" id="IPR041027">
    <property type="entry name" value="FtsK_alpha"/>
</dbReference>
<dbReference type="InterPro" id="IPR002543">
    <property type="entry name" value="FtsK_dom"/>
</dbReference>
<dbReference type="InterPro" id="IPR018541">
    <property type="entry name" value="Ftsk_gamma"/>
</dbReference>
<dbReference type="InterPro" id="IPR027417">
    <property type="entry name" value="P-loop_NTPase"/>
</dbReference>
<dbReference type="InterPro" id="IPR036388">
    <property type="entry name" value="WH-like_DNA-bd_sf"/>
</dbReference>
<dbReference type="InterPro" id="IPR036390">
    <property type="entry name" value="WH_DNA-bd_sf"/>
</dbReference>
<dbReference type="PANTHER" id="PTHR22683:SF41">
    <property type="entry name" value="DNA TRANSLOCASE FTSK"/>
    <property type="match status" value="1"/>
</dbReference>
<dbReference type="PANTHER" id="PTHR22683">
    <property type="entry name" value="SPORULATION PROTEIN RELATED"/>
    <property type="match status" value="1"/>
</dbReference>
<dbReference type="Pfam" id="PF13491">
    <property type="entry name" value="FtsK_4TM"/>
    <property type="match status" value="1"/>
</dbReference>
<dbReference type="Pfam" id="PF17854">
    <property type="entry name" value="FtsK_alpha"/>
    <property type="match status" value="1"/>
</dbReference>
<dbReference type="Pfam" id="PF09397">
    <property type="entry name" value="FtsK_gamma"/>
    <property type="match status" value="1"/>
</dbReference>
<dbReference type="Pfam" id="PF01580">
    <property type="entry name" value="FtsK_SpoIIIE"/>
    <property type="match status" value="1"/>
</dbReference>
<dbReference type="SMART" id="SM00843">
    <property type="entry name" value="Ftsk_gamma"/>
    <property type="match status" value="1"/>
</dbReference>
<dbReference type="SUPFAM" id="SSF52540">
    <property type="entry name" value="P-loop containing nucleoside triphosphate hydrolases"/>
    <property type="match status" value="1"/>
</dbReference>
<dbReference type="SUPFAM" id="SSF46785">
    <property type="entry name" value="Winged helix' DNA-binding domain"/>
    <property type="match status" value="1"/>
</dbReference>
<dbReference type="PROSITE" id="PS50901">
    <property type="entry name" value="FTSK"/>
    <property type="match status" value="1"/>
</dbReference>
<evidence type="ECO:0000250" key="1"/>
<evidence type="ECO:0000255" key="2"/>
<evidence type="ECO:0000255" key="3">
    <source>
        <dbReference type="PROSITE-ProRule" id="PRU00289"/>
    </source>
</evidence>
<evidence type="ECO:0000256" key="4">
    <source>
        <dbReference type="SAM" id="MobiDB-lite"/>
    </source>
</evidence>
<evidence type="ECO:0000305" key="5"/>
<proteinExistence type="inferred from homology"/>
<sequence>MKKSTATPAPLPVPLWRQQLHYRLKEGALIAVGALCLYLWMALLTYDTSDPGFSHTSNVDQVQNAAGRAGAYFADILFMVLGYFAYIFPLLLAVKTWQIFRERHQPWDWSGWLFSWRLIGLVFLVLSGAALAHIHFHPPASLPFSAGGALGESLGDLARNLLNVQGSTLMFIALFLFGLTVFTDLSWFKVMDLTGKITLDLFELVQGAATRWWEARNERKRLEAQLREDEPVFKAAPMAAEKREPAKPSLRERILKREEPPAQPVEPREPTLAREPIVPPRETAPEALAPRETVVPRQQHAAPTIVPPSAASRAPEPSKRAMKEKQAPLFVDSAVEGTLPSISILDPAEQKKIEYSPESLAGVGQLLEIKLKEFGVEVAVDSIHPGPVITRYEIQPAAGVKVSRIANLAKDLARSLAVTSVRVVEVIPGKTTVGIEIPNENRQMVRFSEVLATPQYDEQKSPVTLALGHDIGGKPVITDLAKMPHLLVAGTTGSGKSVGVNAMILSILFKSSPEDARLIMIDPKMLELSIYEGIPHLLCPVVTDMKDAANALRWSVAEMERRYKLMAAMGVRNLAGFNRKIKDAQEAGEVIHDPLYRRESMDDEPPALKTLPTIVVVVDEFADMMMIVGKKVEELIARIAQKARAAGIHLILATQRPSVDVITGLIKANIPTRMAFQVSSKIDSRTIIDQGGAEQLLGHGDMLYMPPGTSLPIRVHGAFVSDDEVHRTVEAWKLRGAPDYNDDILNGVEEAGSGFDGGGGGGEGDDAETDALYDEAVQFVLESRRASISAVQRKLKIGYNRAARMIESMEMAGVVTPMNSNGSREVIAPGGPRD</sequence>
<name>FTSK_PSEPK</name>